<name>FB314_ARATH</name>
<organism>
    <name type="scientific">Arabidopsis thaliana</name>
    <name type="common">Mouse-ear cress</name>
    <dbReference type="NCBI Taxonomy" id="3702"/>
    <lineage>
        <taxon>Eukaryota</taxon>
        <taxon>Viridiplantae</taxon>
        <taxon>Streptophyta</taxon>
        <taxon>Embryophyta</taxon>
        <taxon>Tracheophyta</taxon>
        <taxon>Spermatophyta</taxon>
        <taxon>Magnoliopsida</taxon>
        <taxon>eudicotyledons</taxon>
        <taxon>Gunneridae</taxon>
        <taxon>Pentapetalae</taxon>
        <taxon>rosids</taxon>
        <taxon>malvids</taxon>
        <taxon>Brassicales</taxon>
        <taxon>Brassicaceae</taxon>
        <taxon>Camelineae</taxon>
        <taxon>Arabidopsis</taxon>
    </lineage>
</organism>
<feature type="chain" id="PRO_0000396029" description="Probable F-box protein At1g30780">
    <location>
        <begin position="1"/>
        <end position="482"/>
    </location>
</feature>
<feature type="domain" description="F-box" evidence="1">
    <location>
        <begin position="230"/>
        <end position="280"/>
    </location>
</feature>
<reference key="1">
    <citation type="journal article" date="2000" name="Nature">
        <title>Sequence and analysis of chromosome 1 of the plant Arabidopsis thaliana.</title>
        <authorList>
            <person name="Theologis A."/>
            <person name="Ecker J.R."/>
            <person name="Palm C.J."/>
            <person name="Federspiel N.A."/>
            <person name="Kaul S."/>
            <person name="White O."/>
            <person name="Alonso J."/>
            <person name="Altafi H."/>
            <person name="Araujo R."/>
            <person name="Bowman C.L."/>
            <person name="Brooks S.Y."/>
            <person name="Buehler E."/>
            <person name="Chan A."/>
            <person name="Chao Q."/>
            <person name="Chen H."/>
            <person name="Cheuk R.F."/>
            <person name="Chin C.W."/>
            <person name="Chung M.K."/>
            <person name="Conn L."/>
            <person name="Conway A.B."/>
            <person name="Conway A.R."/>
            <person name="Creasy T.H."/>
            <person name="Dewar K."/>
            <person name="Dunn P."/>
            <person name="Etgu P."/>
            <person name="Feldblyum T.V."/>
            <person name="Feng J.-D."/>
            <person name="Fong B."/>
            <person name="Fujii C.Y."/>
            <person name="Gill J.E."/>
            <person name="Goldsmith A.D."/>
            <person name="Haas B."/>
            <person name="Hansen N.F."/>
            <person name="Hughes B."/>
            <person name="Huizar L."/>
            <person name="Hunter J.L."/>
            <person name="Jenkins J."/>
            <person name="Johnson-Hopson C."/>
            <person name="Khan S."/>
            <person name="Khaykin E."/>
            <person name="Kim C.J."/>
            <person name="Koo H.L."/>
            <person name="Kremenetskaia I."/>
            <person name="Kurtz D.B."/>
            <person name="Kwan A."/>
            <person name="Lam B."/>
            <person name="Langin-Hooper S."/>
            <person name="Lee A."/>
            <person name="Lee J.M."/>
            <person name="Lenz C.A."/>
            <person name="Li J.H."/>
            <person name="Li Y.-P."/>
            <person name="Lin X."/>
            <person name="Liu S.X."/>
            <person name="Liu Z.A."/>
            <person name="Luros J.S."/>
            <person name="Maiti R."/>
            <person name="Marziali A."/>
            <person name="Militscher J."/>
            <person name="Miranda M."/>
            <person name="Nguyen M."/>
            <person name="Nierman W.C."/>
            <person name="Osborne B.I."/>
            <person name="Pai G."/>
            <person name="Peterson J."/>
            <person name="Pham P.K."/>
            <person name="Rizzo M."/>
            <person name="Rooney T."/>
            <person name="Rowley D."/>
            <person name="Sakano H."/>
            <person name="Salzberg S.L."/>
            <person name="Schwartz J.R."/>
            <person name="Shinn P."/>
            <person name="Southwick A.M."/>
            <person name="Sun H."/>
            <person name="Tallon L.J."/>
            <person name="Tambunga G."/>
            <person name="Toriumi M.J."/>
            <person name="Town C.D."/>
            <person name="Utterback T."/>
            <person name="Van Aken S."/>
            <person name="Vaysberg M."/>
            <person name="Vysotskaia V.S."/>
            <person name="Walker M."/>
            <person name="Wu D."/>
            <person name="Yu G."/>
            <person name="Fraser C.M."/>
            <person name="Venter J.C."/>
            <person name="Davis R.W."/>
        </authorList>
    </citation>
    <scope>NUCLEOTIDE SEQUENCE [LARGE SCALE GENOMIC DNA]</scope>
    <source>
        <strain>cv. Columbia</strain>
    </source>
</reference>
<reference key="2">
    <citation type="journal article" date="2017" name="Plant J.">
        <title>Araport11: a complete reannotation of the Arabidopsis thaliana reference genome.</title>
        <authorList>
            <person name="Cheng C.Y."/>
            <person name="Krishnakumar V."/>
            <person name="Chan A.P."/>
            <person name="Thibaud-Nissen F."/>
            <person name="Schobel S."/>
            <person name="Town C.D."/>
        </authorList>
    </citation>
    <scope>GENOME REANNOTATION</scope>
    <source>
        <strain>cv. Columbia</strain>
    </source>
</reference>
<comment type="sequence caution" evidence="2">
    <conflict type="erroneous gene model prediction">
        <sequence resource="EMBL-CDS" id="AAD32928"/>
    </conflict>
</comment>
<protein>
    <recommendedName>
        <fullName>Probable F-box protein At1g30780</fullName>
    </recommendedName>
</protein>
<gene>
    <name type="ordered locus">At1g30780</name>
    <name type="ORF">T17H7.3</name>
</gene>
<keyword id="KW-1185">Reference proteome</keyword>
<dbReference type="EMBL" id="AC004135">
    <property type="protein sequence ID" value="AAD32928.1"/>
    <property type="status" value="ALT_SEQ"/>
    <property type="molecule type" value="Genomic_DNA"/>
</dbReference>
<dbReference type="EMBL" id="CP002684">
    <property type="protein sequence ID" value="AEE31271.1"/>
    <property type="molecule type" value="Genomic_DNA"/>
</dbReference>
<dbReference type="PIR" id="E86433">
    <property type="entry name" value="E86433"/>
</dbReference>
<dbReference type="RefSeq" id="NP_174364.2">
    <property type="nucleotide sequence ID" value="NM_102814.2"/>
</dbReference>
<dbReference type="GlyGen" id="Q9SY17">
    <property type="glycosylation" value="1 site"/>
</dbReference>
<dbReference type="iPTMnet" id="Q9SY17"/>
<dbReference type="PaxDb" id="3702-AT1G30780.1"/>
<dbReference type="EnsemblPlants" id="AT1G30780.1">
    <property type="protein sequence ID" value="AT1G30780.1"/>
    <property type="gene ID" value="AT1G30780"/>
</dbReference>
<dbReference type="GeneID" id="839959"/>
<dbReference type="Gramene" id="AT1G30780.1">
    <property type="protein sequence ID" value="AT1G30780.1"/>
    <property type="gene ID" value="AT1G30780"/>
</dbReference>
<dbReference type="KEGG" id="ath:AT1G30780"/>
<dbReference type="Araport" id="AT1G30780"/>
<dbReference type="TAIR" id="AT1G30780"/>
<dbReference type="HOGENOM" id="CLU_596360_0_0_1"/>
<dbReference type="InParanoid" id="Q9SY17"/>
<dbReference type="OMA" id="QGWRHIE"/>
<dbReference type="PRO" id="PR:Q9SY17"/>
<dbReference type="Proteomes" id="UP000006548">
    <property type="component" value="Chromosome 1"/>
</dbReference>
<dbReference type="ExpressionAtlas" id="Q9SY17">
    <property type="expression patterns" value="differential"/>
</dbReference>
<dbReference type="Gene3D" id="1.20.1280.50">
    <property type="match status" value="1"/>
</dbReference>
<dbReference type="InterPro" id="IPR013187">
    <property type="entry name" value="F-box-assoc_dom_typ3"/>
</dbReference>
<dbReference type="InterPro" id="IPR017451">
    <property type="entry name" value="F-box-assoc_interact_dom"/>
</dbReference>
<dbReference type="InterPro" id="IPR036047">
    <property type="entry name" value="F-box-like_dom_sf"/>
</dbReference>
<dbReference type="InterPro" id="IPR001810">
    <property type="entry name" value="F-box_dom"/>
</dbReference>
<dbReference type="NCBIfam" id="TIGR01640">
    <property type="entry name" value="F_box_assoc_1"/>
    <property type="match status" value="1"/>
</dbReference>
<dbReference type="PANTHER" id="PTHR31111">
    <property type="entry name" value="BNAA05G37150D PROTEIN-RELATED"/>
    <property type="match status" value="1"/>
</dbReference>
<dbReference type="PANTHER" id="PTHR31111:SF111">
    <property type="entry name" value="F-BOX DOMAIN-CONTAINING PROTEIN"/>
    <property type="match status" value="1"/>
</dbReference>
<dbReference type="Pfam" id="PF00646">
    <property type="entry name" value="F-box"/>
    <property type="match status" value="1"/>
</dbReference>
<dbReference type="Pfam" id="PF08268">
    <property type="entry name" value="FBA_3"/>
    <property type="match status" value="2"/>
</dbReference>
<dbReference type="SMART" id="SM00256">
    <property type="entry name" value="FBOX"/>
    <property type="match status" value="1"/>
</dbReference>
<dbReference type="SUPFAM" id="SSF81383">
    <property type="entry name" value="F-box domain"/>
    <property type="match status" value="1"/>
</dbReference>
<dbReference type="PROSITE" id="PS50181">
    <property type="entry name" value="FBOX"/>
    <property type="match status" value="1"/>
</dbReference>
<proteinExistence type="evidence at transcript level"/>
<evidence type="ECO:0000255" key="1">
    <source>
        <dbReference type="PROSITE-ProRule" id="PRU00080"/>
    </source>
</evidence>
<evidence type="ECO:0000305" key="2"/>
<accession>Q9SY17</accession>
<sequence length="482" mass="54204">MASLSLVLRYVVFLSFFILQKPKETFSSRLQRSHAKVAQIGADDYPSSGRNTPVHDLGFPDFPSFQEAVAPPPPPPDLPLLAPPLPDVPLLPPPAFPDFEKPRLPVPVWPSLPEYPPFPFVDQSAPYQGFAPRFDESANWMPSTPSIPQVFPCLRFKSNLLRVEFWVSSGTAVKGKDRFCNRPSKLDPNPVDLKTVRLPSKFRLKKLLCRVESSEVCFGDGNEKDTNPSEIDLDSLPFDLKMVILTRLSAKSLTNFKRVSKMWSSIIGSQRFIDSFFTMSSKQSRCPKFPVNTRFVGYDPIDDQQKALSVSVPSRKRNLEHKVLTLGGGGQGWRHIEVTNAPFSPVTVGVSIDGFVYYGAYSPTPPMNPVLVCFDVRSEKISFIKAPNDVLQWGFDLWILEDVERHEWSKQTCVFPSSVAWDYVGDIQMSFPGTNKAGIGDDEEFRRCSGFVDEGECHVRIAPQHVESIARFKDPIMSRILM</sequence>